<protein>
    <recommendedName>
        <fullName evidence="1">Large ribosomal subunit protein bL17</fullName>
    </recommendedName>
    <alternativeName>
        <fullName evidence="2">50S ribosomal protein L17</fullName>
    </alternativeName>
</protein>
<reference key="1">
    <citation type="journal article" date="2007" name="PLoS ONE">
        <title>Genome sequencing shows that European isolates of Francisella tularensis subspecies tularensis are almost identical to US laboratory strain Schu S4.</title>
        <authorList>
            <person name="Chaudhuri R.R."/>
            <person name="Ren C.-P."/>
            <person name="Desmond L."/>
            <person name="Vincent G.A."/>
            <person name="Silman N.J."/>
            <person name="Brehm J.K."/>
            <person name="Elmore M.J."/>
            <person name="Hudson M.J."/>
            <person name="Forsman M."/>
            <person name="Isherwood K.E."/>
            <person name="Gurycova D."/>
            <person name="Minton N.P."/>
            <person name="Titball R.W."/>
            <person name="Pallen M.J."/>
            <person name="Vipond R."/>
        </authorList>
    </citation>
    <scope>NUCLEOTIDE SEQUENCE [LARGE SCALE GENOMIC DNA]</scope>
    <source>
        <strain>FSC 198</strain>
    </source>
</reference>
<accession>Q14J94</accession>
<proteinExistence type="inferred from homology"/>
<gene>
    <name evidence="1" type="primary">rplQ</name>
    <name type="ordered locus">FTF0351</name>
</gene>
<evidence type="ECO:0000255" key="1">
    <source>
        <dbReference type="HAMAP-Rule" id="MF_01368"/>
    </source>
</evidence>
<evidence type="ECO:0000305" key="2"/>
<keyword id="KW-0687">Ribonucleoprotein</keyword>
<keyword id="KW-0689">Ribosomal protein</keyword>
<dbReference type="EMBL" id="AM286280">
    <property type="protein sequence ID" value="CAL08367.1"/>
    <property type="molecule type" value="Genomic_DNA"/>
</dbReference>
<dbReference type="RefSeq" id="WP_011242233.1">
    <property type="nucleotide sequence ID" value="NC_008245.1"/>
</dbReference>
<dbReference type="SMR" id="Q14J94"/>
<dbReference type="KEGG" id="ftf:FTF0351"/>
<dbReference type="HOGENOM" id="CLU_074407_2_0_6"/>
<dbReference type="GO" id="GO:0022625">
    <property type="term" value="C:cytosolic large ribosomal subunit"/>
    <property type="evidence" value="ECO:0007669"/>
    <property type="project" value="TreeGrafter"/>
</dbReference>
<dbReference type="GO" id="GO:0003735">
    <property type="term" value="F:structural constituent of ribosome"/>
    <property type="evidence" value="ECO:0007669"/>
    <property type="project" value="InterPro"/>
</dbReference>
<dbReference type="GO" id="GO:0006412">
    <property type="term" value="P:translation"/>
    <property type="evidence" value="ECO:0007669"/>
    <property type="project" value="UniProtKB-UniRule"/>
</dbReference>
<dbReference type="Gene3D" id="3.90.1030.10">
    <property type="entry name" value="Ribosomal protein L17"/>
    <property type="match status" value="1"/>
</dbReference>
<dbReference type="HAMAP" id="MF_01368">
    <property type="entry name" value="Ribosomal_bL17"/>
    <property type="match status" value="1"/>
</dbReference>
<dbReference type="InterPro" id="IPR000456">
    <property type="entry name" value="Ribosomal_bL17"/>
</dbReference>
<dbReference type="InterPro" id="IPR047859">
    <property type="entry name" value="Ribosomal_bL17_CS"/>
</dbReference>
<dbReference type="InterPro" id="IPR036373">
    <property type="entry name" value="Ribosomal_bL17_sf"/>
</dbReference>
<dbReference type="NCBIfam" id="TIGR00059">
    <property type="entry name" value="L17"/>
    <property type="match status" value="1"/>
</dbReference>
<dbReference type="PANTHER" id="PTHR14413:SF16">
    <property type="entry name" value="LARGE RIBOSOMAL SUBUNIT PROTEIN BL17M"/>
    <property type="match status" value="1"/>
</dbReference>
<dbReference type="PANTHER" id="PTHR14413">
    <property type="entry name" value="RIBOSOMAL PROTEIN L17"/>
    <property type="match status" value="1"/>
</dbReference>
<dbReference type="Pfam" id="PF01196">
    <property type="entry name" value="Ribosomal_L17"/>
    <property type="match status" value="1"/>
</dbReference>
<dbReference type="SUPFAM" id="SSF64263">
    <property type="entry name" value="Prokaryotic ribosomal protein L17"/>
    <property type="match status" value="1"/>
</dbReference>
<dbReference type="PROSITE" id="PS01167">
    <property type="entry name" value="RIBOSOMAL_L17"/>
    <property type="match status" value="1"/>
</dbReference>
<organism>
    <name type="scientific">Francisella tularensis subsp. tularensis (strain FSC 198)</name>
    <dbReference type="NCBI Taxonomy" id="393115"/>
    <lineage>
        <taxon>Bacteria</taxon>
        <taxon>Pseudomonadati</taxon>
        <taxon>Pseudomonadota</taxon>
        <taxon>Gammaproteobacteria</taxon>
        <taxon>Thiotrichales</taxon>
        <taxon>Francisellaceae</taxon>
        <taxon>Francisella</taxon>
    </lineage>
</organism>
<name>RL17_FRAT1</name>
<sequence length="145" mass="16754">MRHRKQGRKFGRTSSHRKAMFKNMSASLINHELIKTTLPKAKELRAIVEPLVTLAKREHKLRQELDTNSNEFKAQSVALRRQAFDFLRNKAAVTKLFEEFGARYAERAGGYTRILKCGYRFGDKAPMAFIELVDRPQVEEAADEE</sequence>
<feature type="chain" id="PRO_1000055827" description="Large ribosomal subunit protein bL17">
    <location>
        <begin position="1"/>
        <end position="145"/>
    </location>
</feature>
<comment type="subunit">
    <text evidence="1">Part of the 50S ribosomal subunit. Contacts protein L32.</text>
</comment>
<comment type="similarity">
    <text evidence="1">Belongs to the bacterial ribosomal protein bL17 family.</text>
</comment>